<sequence>MAETAASRTGSVARKTNETSISVSVNLDGTGKSKISTGVGFFDHMLDQLSRHSLIDMEIEAKGDLHIDDHHTVEDTGIAIGQAISKALGDRRGITRYASIDLAMDETMTKAAVDLSGRPFLVWNVAFSAPKIGTFDTELVREFFQALAQNAGITLHLLNHYGANNHHIAETCFKAVARALRTATEIDPRQAGRVPSTKGTLV</sequence>
<protein>
    <recommendedName>
        <fullName evidence="1">Imidazoleglycerol-phosphate dehydratase</fullName>
        <shortName evidence="1">IGPD</shortName>
        <ecNumber evidence="1">4.2.1.19</ecNumber>
    </recommendedName>
</protein>
<gene>
    <name evidence="1" type="primary">hisB</name>
    <name type="ordered locus">RHE_CH00047</name>
</gene>
<feature type="chain" id="PRO_0000336337" description="Imidazoleglycerol-phosphate dehydratase">
    <location>
        <begin position="1"/>
        <end position="202"/>
    </location>
</feature>
<organism>
    <name type="scientific">Rhizobium etli (strain ATCC 51251 / DSM 11541 / JCM 21823 / NBRC 15573 / CFN 42)</name>
    <dbReference type="NCBI Taxonomy" id="347834"/>
    <lineage>
        <taxon>Bacteria</taxon>
        <taxon>Pseudomonadati</taxon>
        <taxon>Pseudomonadota</taxon>
        <taxon>Alphaproteobacteria</taxon>
        <taxon>Hyphomicrobiales</taxon>
        <taxon>Rhizobiaceae</taxon>
        <taxon>Rhizobium/Agrobacterium group</taxon>
        <taxon>Rhizobium</taxon>
    </lineage>
</organism>
<comment type="catalytic activity">
    <reaction evidence="1">
        <text>D-erythro-1-(imidazol-4-yl)glycerol 3-phosphate = 3-(imidazol-4-yl)-2-oxopropyl phosphate + H2O</text>
        <dbReference type="Rhea" id="RHEA:11040"/>
        <dbReference type="ChEBI" id="CHEBI:15377"/>
        <dbReference type="ChEBI" id="CHEBI:57766"/>
        <dbReference type="ChEBI" id="CHEBI:58278"/>
        <dbReference type="EC" id="4.2.1.19"/>
    </reaction>
</comment>
<comment type="pathway">
    <text evidence="1">Amino-acid biosynthesis; L-histidine biosynthesis; L-histidine from 5-phospho-alpha-D-ribose 1-diphosphate: step 6/9.</text>
</comment>
<comment type="subcellular location">
    <subcellularLocation>
        <location evidence="1">Cytoplasm</location>
    </subcellularLocation>
</comment>
<comment type="similarity">
    <text evidence="1">Belongs to the imidazoleglycerol-phosphate dehydratase family.</text>
</comment>
<reference key="1">
    <citation type="journal article" date="2006" name="Proc. Natl. Acad. Sci. U.S.A.">
        <title>The partitioned Rhizobium etli genome: genetic and metabolic redundancy in seven interacting replicons.</title>
        <authorList>
            <person name="Gonzalez V."/>
            <person name="Santamaria R.I."/>
            <person name="Bustos P."/>
            <person name="Hernandez-Gonzalez I."/>
            <person name="Medrano-Soto A."/>
            <person name="Moreno-Hagelsieb G."/>
            <person name="Janga S.C."/>
            <person name="Ramirez M.A."/>
            <person name="Jimenez-Jacinto V."/>
            <person name="Collado-Vides J."/>
            <person name="Davila G."/>
        </authorList>
    </citation>
    <scope>NUCLEOTIDE SEQUENCE [LARGE SCALE GENOMIC DNA]</scope>
    <source>
        <strain>ATCC 51251 / DSM 11541 / JCM 21823 / NBRC 15573 / CFN 42</strain>
    </source>
</reference>
<proteinExistence type="inferred from homology"/>
<accession>Q2KE56</accession>
<name>HIS7_RHIEC</name>
<dbReference type="EC" id="4.2.1.19" evidence="1"/>
<dbReference type="EMBL" id="CP000133">
    <property type="protein sequence ID" value="ABC88880.1"/>
    <property type="molecule type" value="Genomic_DNA"/>
</dbReference>
<dbReference type="RefSeq" id="WP_011423451.1">
    <property type="nucleotide sequence ID" value="NC_007761.1"/>
</dbReference>
<dbReference type="SMR" id="Q2KE56"/>
<dbReference type="KEGG" id="ret:RHE_CH00047"/>
<dbReference type="eggNOG" id="COG0131">
    <property type="taxonomic scope" value="Bacteria"/>
</dbReference>
<dbReference type="HOGENOM" id="CLU_044308_3_0_5"/>
<dbReference type="OrthoDB" id="9813612at2"/>
<dbReference type="UniPathway" id="UPA00031">
    <property type="reaction ID" value="UER00011"/>
</dbReference>
<dbReference type="Proteomes" id="UP000001936">
    <property type="component" value="Chromosome"/>
</dbReference>
<dbReference type="GO" id="GO:0005737">
    <property type="term" value="C:cytoplasm"/>
    <property type="evidence" value="ECO:0007669"/>
    <property type="project" value="UniProtKB-SubCell"/>
</dbReference>
<dbReference type="GO" id="GO:0004424">
    <property type="term" value="F:imidazoleglycerol-phosphate dehydratase activity"/>
    <property type="evidence" value="ECO:0007669"/>
    <property type="project" value="UniProtKB-UniRule"/>
</dbReference>
<dbReference type="GO" id="GO:0000105">
    <property type="term" value="P:L-histidine biosynthetic process"/>
    <property type="evidence" value="ECO:0007669"/>
    <property type="project" value="UniProtKB-UniRule"/>
</dbReference>
<dbReference type="CDD" id="cd07914">
    <property type="entry name" value="IGPD"/>
    <property type="match status" value="1"/>
</dbReference>
<dbReference type="FunFam" id="3.30.230.40:FF:000001">
    <property type="entry name" value="Imidazoleglycerol-phosphate dehydratase HisB"/>
    <property type="match status" value="1"/>
</dbReference>
<dbReference type="FunFam" id="3.30.230.40:FF:000003">
    <property type="entry name" value="Imidazoleglycerol-phosphate dehydratase HisB"/>
    <property type="match status" value="1"/>
</dbReference>
<dbReference type="Gene3D" id="3.30.230.40">
    <property type="entry name" value="Imidazole glycerol phosphate dehydratase, domain 1"/>
    <property type="match status" value="2"/>
</dbReference>
<dbReference type="HAMAP" id="MF_00076">
    <property type="entry name" value="HisB"/>
    <property type="match status" value="1"/>
</dbReference>
<dbReference type="InterPro" id="IPR038494">
    <property type="entry name" value="IGPD_sf"/>
</dbReference>
<dbReference type="InterPro" id="IPR000807">
    <property type="entry name" value="ImidazoleglycerolP_deHydtase"/>
</dbReference>
<dbReference type="InterPro" id="IPR020565">
    <property type="entry name" value="ImidazoleglycerP_deHydtase_CS"/>
</dbReference>
<dbReference type="InterPro" id="IPR020568">
    <property type="entry name" value="Ribosomal_Su5_D2-typ_SF"/>
</dbReference>
<dbReference type="NCBIfam" id="NF002109">
    <property type="entry name" value="PRK00951.1-5"/>
    <property type="match status" value="1"/>
</dbReference>
<dbReference type="NCBIfam" id="NF002111">
    <property type="entry name" value="PRK00951.2-1"/>
    <property type="match status" value="1"/>
</dbReference>
<dbReference type="NCBIfam" id="NF002114">
    <property type="entry name" value="PRK00951.2-4"/>
    <property type="match status" value="1"/>
</dbReference>
<dbReference type="PANTHER" id="PTHR23133:SF2">
    <property type="entry name" value="IMIDAZOLEGLYCEROL-PHOSPHATE DEHYDRATASE"/>
    <property type="match status" value="1"/>
</dbReference>
<dbReference type="PANTHER" id="PTHR23133">
    <property type="entry name" value="IMIDAZOLEGLYCEROL-PHOSPHATE DEHYDRATASE HIS7"/>
    <property type="match status" value="1"/>
</dbReference>
<dbReference type="Pfam" id="PF00475">
    <property type="entry name" value="IGPD"/>
    <property type="match status" value="1"/>
</dbReference>
<dbReference type="SUPFAM" id="SSF54211">
    <property type="entry name" value="Ribosomal protein S5 domain 2-like"/>
    <property type="match status" value="2"/>
</dbReference>
<dbReference type="PROSITE" id="PS00954">
    <property type="entry name" value="IGP_DEHYDRATASE_1"/>
    <property type="match status" value="1"/>
</dbReference>
<dbReference type="PROSITE" id="PS00955">
    <property type="entry name" value="IGP_DEHYDRATASE_2"/>
    <property type="match status" value="1"/>
</dbReference>
<keyword id="KW-0028">Amino-acid biosynthesis</keyword>
<keyword id="KW-0963">Cytoplasm</keyword>
<keyword id="KW-0368">Histidine biosynthesis</keyword>
<keyword id="KW-0456">Lyase</keyword>
<keyword id="KW-1185">Reference proteome</keyword>
<evidence type="ECO:0000255" key="1">
    <source>
        <dbReference type="HAMAP-Rule" id="MF_00076"/>
    </source>
</evidence>